<reference key="1">
    <citation type="journal article" date="2009" name="Proc. Natl. Acad. Sci. U.S.A.">
        <title>Biogeography of the Sulfolobus islandicus pan-genome.</title>
        <authorList>
            <person name="Reno M.L."/>
            <person name="Held N.L."/>
            <person name="Fields C.J."/>
            <person name="Burke P.V."/>
            <person name="Whitaker R.J."/>
        </authorList>
    </citation>
    <scope>NUCLEOTIDE SEQUENCE [LARGE SCALE GENOMIC DNA]</scope>
    <source>
        <strain>M.16.27</strain>
    </source>
</reference>
<gene>
    <name evidence="1" type="primary">rpl39e</name>
    <name type="ordered locus">M1627_1871</name>
</gene>
<sequence length="51" mass="6127">MSRNKPVAKKFRLAKALKANSPIPIWIVLKTRGRVRYNPLRRNWRRNDLKV</sequence>
<evidence type="ECO:0000255" key="1">
    <source>
        <dbReference type="HAMAP-Rule" id="MF_00629"/>
    </source>
</evidence>
<evidence type="ECO:0000305" key="2"/>
<feature type="chain" id="PRO_1000212321" description="Large ribosomal subunit protein eL39">
    <location>
        <begin position="1"/>
        <end position="51"/>
    </location>
</feature>
<keyword id="KW-0687">Ribonucleoprotein</keyword>
<keyword id="KW-0689">Ribosomal protein</keyword>
<comment type="similarity">
    <text evidence="1">Belongs to the eukaryotic ribosomal protein eL39 family.</text>
</comment>
<organism>
    <name type="scientific">Saccharolobus islandicus (strain M.16.27)</name>
    <name type="common">Sulfolobus islandicus</name>
    <dbReference type="NCBI Taxonomy" id="427318"/>
    <lineage>
        <taxon>Archaea</taxon>
        <taxon>Thermoproteota</taxon>
        <taxon>Thermoprotei</taxon>
        <taxon>Sulfolobales</taxon>
        <taxon>Sulfolobaceae</taxon>
        <taxon>Saccharolobus</taxon>
    </lineage>
</organism>
<proteinExistence type="inferred from homology"/>
<accession>C3MZB1</accession>
<protein>
    <recommendedName>
        <fullName evidence="1">Large ribosomal subunit protein eL39</fullName>
    </recommendedName>
    <alternativeName>
        <fullName evidence="2">50S ribosomal protein L39e</fullName>
    </alternativeName>
</protein>
<dbReference type="EMBL" id="CP001401">
    <property type="protein sequence ID" value="ACP55743.1"/>
    <property type="molecule type" value="Genomic_DNA"/>
</dbReference>
<dbReference type="RefSeq" id="WP_009990648.1">
    <property type="nucleotide sequence ID" value="NC_012632.1"/>
</dbReference>
<dbReference type="SMR" id="C3MZB1"/>
<dbReference type="KEGG" id="sim:M1627_1871"/>
<dbReference type="HOGENOM" id="CLU_181948_4_0_2"/>
<dbReference type="Proteomes" id="UP000002307">
    <property type="component" value="Chromosome"/>
</dbReference>
<dbReference type="GO" id="GO:0022625">
    <property type="term" value="C:cytosolic large ribosomal subunit"/>
    <property type="evidence" value="ECO:0007669"/>
    <property type="project" value="TreeGrafter"/>
</dbReference>
<dbReference type="GO" id="GO:0003735">
    <property type="term" value="F:structural constituent of ribosome"/>
    <property type="evidence" value="ECO:0007669"/>
    <property type="project" value="InterPro"/>
</dbReference>
<dbReference type="GO" id="GO:0006412">
    <property type="term" value="P:translation"/>
    <property type="evidence" value="ECO:0007669"/>
    <property type="project" value="UniProtKB-UniRule"/>
</dbReference>
<dbReference type="FunFam" id="1.10.1620.10:FF:000001">
    <property type="entry name" value="60S ribosomal protein-like L39"/>
    <property type="match status" value="1"/>
</dbReference>
<dbReference type="Gene3D" id="1.10.1620.10">
    <property type="entry name" value="Ribosomal protein L39e"/>
    <property type="match status" value="1"/>
</dbReference>
<dbReference type="HAMAP" id="MF_00629">
    <property type="entry name" value="Ribosomal_eL39"/>
    <property type="match status" value="1"/>
</dbReference>
<dbReference type="InterPro" id="IPR000077">
    <property type="entry name" value="Ribosomal_eL39"/>
</dbReference>
<dbReference type="InterPro" id="IPR020083">
    <property type="entry name" value="Ribosomal_eL39_CS"/>
</dbReference>
<dbReference type="InterPro" id="IPR023626">
    <property type="entry name" value="Ribosomal_eL39_dom_sf"/>
</dbReference>
<dbReference type="NCBIfam" id="NF002316">
    <property type="entry name" value="PRK01242.1"/>
    <property type="match status" value="1"/>
</dbReference>
<dbReference type="PANTHER" id="PTHR19970:SF0">
    <property type="entry name" value="LARGE RIBOSOMAL SUBUNIT PROTEIN EL39"/>
    <property type="match status" value="1"/>
</dbReference>
<dbReference type="PANTHER" id="PTHR19970">
    <property type="entry name" value="RIBOSOMAL PROTEIN L39E"/>
    <property type="match status" value="1"/>
</dbReference>
<dbReference type="Pfam" id="PF00832">
    <property type="entry name" value="Ribosomal_L39"/>
    <property type="match status" value="1"/>
</dbReference>
<dbReference type="SUPFAM" id="SSF48662">
    <property type="entry name" value="Ribosomal protein L39e"/>
    <property type="match status" value="1"/>
</dbReference>
<dbReference type="PROSITE" id="PS00051">
    <property type="entry name" value="RIBOSOMAL_L39E"/>
    <property type="match status" value="1"/>
</dbReference>
<name>RL39_SACI3</name>